<feature type="chain" id="PRO_1000078422" description="ATP-dependent protease subunit HslV">
    <location>
        <begin position="1"/>
        <end position="185"/>
    </location>
</feature>
<feature type="active site" evidence="1">
    <location>
        <position position="14"/>
    </location>
</feature>
<feature type="binding site" evidence="1">
    <location>
        <position position="168"/>
    </location>
    <ligand>
        <name>Na(+)</name>
        <dbReference type="ChEBI" id="CHEBI:29101"/>
    </ligand>
</feature>
<feature type="binding site" evidence="1">
    <location>
        <position position="171"/>
    </location>
    <ligand>
        <name>Na(+)</name>
        <dbReference type="ChEBI" id="CHEBI:29101"/>
    </ligand>
</feature>
<feature type="binding site" evidence="1">
    <location>
        <position position="174"/>
    </location>
    <ligand>
        <name>Na(+)</name>
        <dbReference type="ChEBI" id="CHEBI:29101"/>
    </ligand>
</feature>
<comment type="function">
    <text evidence="1">Protease subunit of a proteasome-like degradation complex believed to be a general protein degrading machinery.</text>
</comment>
<comment type="catalytic activity">
    <reaction evidence="1">
        <text>ATP-dependent cleavage of peptide bonds with broad specificity.</text>
        <dbReference type="EC" id="3.4.25.2"/>
    </reaction>
</comment>
<comment type="activity regulation">
    <text evidence="1">Allosterically activated by HslU binding.</text>
</comment>
<comment type="subunit">
    <text evidence="1">A double ring-shaped homohexamer of HslV is capped on each side by a ring-shaped HslU homohexamer. The assembly of the HslU/HslV complex is dependent on binding of ATP.</text>
</comment>
<comment type="subcellular location">
    <subcellularLocation>
        <location evidence="1">Cytoplasm</location>
    </subcellularLocation>
</comment>
<comment type="similarity">
    <text evidence="1">Belongs to the peptidase T1B family. HslV subfamily.</text>
</comment>
<gene>
    <name evidence="1" type="primary">hslV</name>
    <name type="ordered locus">HNE_2033</name>
</gene>
<keyword id="KW-0021">Allosteric enzyme</keyword>
<keyword id="KW-0963">Cytoplasm</keyword>
<keyword id="KW-0378">Hydrolase</keyword>
<keyword id="KW-0479">Metal-binding</keyword>
<keyword id="KW-0645">Protease</keyword>
<keyword id="KW-1185">Reference proteome</keyword>
<keyword id="KW-0915">Sodium</keyword>
<keyword id="KW-0888">Threonine protease</keyword>
<evidence type="ECO:0000255" key="1">
    <source>
        <dbReference type="HAMAP-Rule" id="MF_00248"/>
    </source>
</evidence>
<dbReference type="EC" id="3.4.25.2" evidence="1"/>
<dbReference type="EMBL" id="CP000158">
    <property type="protein sequence ID" value="ABI76598.1"/>
    <property type="molecule type" value="Genomic_DNA"/>
</dbReference>
<dbReference type="RefSeq" id="WP_011647030.1">
    <property type="nucleotide sequence ID" value="NC_008358.1"/>
</dbReference>
<dbReference type="SMR" id="Q0C0L2"/>
<dbReference type="STRING" id="228405.HNE_2033"/>
<dbReference type="MEROPS" id="T01.006"/>
<dbReference type="KEGG" id="hne:HNE_2033"/>
<dbReference type="eggNOG" id="COG5405">
    <property type="taxonomic scope" value="Bacteria"/>
</dbReference>
<dbReference type="HOGENOM" id="CLU_093872_1_0_5"/>
<dbReference type="Proteomes" id="UP000001959">
    <property type="component" value="Chromosome"/>
</dbReference>
<dbReference type="GO" id="GO:0009376">
    <property type="term" value="C:HslUV protease complex"/>
    <property type="evidence" value="ECO:0007669"/>
    <property type="project" value="UniProtKB-UniRule"/>
</dbReference>
<dbReference type="GO" id="GO:0005839">
    <property type="term" value="C:proteasome core complex"/>
    <property type="evidence" value="ECO:0007669"/>
    <property type="project" value="InterPro"/>
</dbReference>
<dbReference type="GO" id="GO:0046872">
    <property type="term" value="F:metal ion binding"/>
    <property type="evidence" value="ECO:0007669"/>
    <property type="project" value="UniProtKB-KW"/>
</dbReference>
<dbReference type="GO" id="GO:0004298">
    <property type="term" value="F:threonine-type endopeptidase activity"/>
    <property type="evidence" value="ECO:0007669"/>
    <property type="project" value="UniProtKB-KW"/>
</dbReference>
<dbReference type="GO" id="GO:0051603">
    <property type="term" value="P:proteolysis involved in protein catabolic process"/>
    <property type="evidence" value="ECO:0007669"/>
    <property type="project" value="InterPro"/>
</dbReference>
<dbReference type="CDD" id="cd01913">
    <property type="entry name" value="protease_HslV"/>
    <property type="match status" value="1"/>
</dbReference>
<dbReference type="Gene3D" id="3.60.20.10">
    <property type="entry name" value="Glutamine Phosphoribosylpyrophosphate, subunit 1, domain 1"/>
    <property type="match status" value="1"/>
</dbReference>
<dbReference type="HAMAP" id="MF_00248">
    <property type="entry name" value="HslV"/>
    <property type="match status" value="1"/>
</dbReference>
<dbReference type="InterPro" id="IPR022281">
    <property type="entry name" value="ATP-dep_Prtase_HsIV_su"/>
</dbReference>
<dbReference type="InterPro" id="IPR029055">
    <property type="entry name" value="Ntn_hydrolases_N"/>
</dbReference>
<dbReference type="InterPro" id="IPR001353">
    <property type="entry name" value="Proteasome_sua/b"/>
</dbReference>
<dbReference type="InterPro" id="IPR023333">
    <property type="entry name" value="Proteasome_suB-type"/>
</dbReference>
<dbReference type="NCBIfam" id="TIGR03692">
    <property type="entry name" value="ATP_dep_HslV"/>
    <property type="match status" value="1"/>
</dbReference>
<dbReference type="NCBIfam" id="NF003964">
    <property type="entry name" value="PRK05456.1"/>
    <property type="match status" value="1"/>
</dbReference>
<dbReference type="PANTHER" id="PTHR32194:SF7">
    <property type="entry name" value="ATP-DEPENDENT PROTEASE SUBUNIT HSLV"/>
    <property type="match status" value="1"/>
</dbReference>
<dbReference type="PANTHER" id="PTHR32194">
    <property type="entry name" value="METALLOPROTEASE TLDD"/>
    <property type="match status" value="1"/>
</dbReference>
<dbReference type="Pfam" id="PF00227">
    <property type="entry name" value="Proteasome"/>
    <property type="match status" value="1"/>
</dbReference>
<dbReference type="PIRSF" id="PIRSF039093">
    <property type="entry name" value="HslV"/>
    <property type="match status" value="1"/>
</dbReference>
<dbReference type="SUPFAM" id="SSF56235">
    <property type="entry name" value="N-terminal nucleophile aminohydrolases (Ntn hydrolases)"/>
    <property type="match status" value="1"/>
</dbReference>
<dbReference type="PROSITE" id="PS51476">
    <property type="entry name" value="PROTEASOME_BETA_2"/>
    <property type="match status" value="1"/>
</dbReference>
<accession>Q0C0L2</accession>
<sequence length="185" mass="20144">MTNPQDSKAIWHGTTVLAVRKNGKLVMLSDGQVSMGQTIMKGNARKVRRIAGGQILAGFAGATADAFTLFERLEAKLERFPDQLQRAAVELAKDWRTEKYLQKLEALLIVADKHSTLVITGAGDVLEPEHHVVSIGSGGNYALAAARGLYDYEEDAETIGRKAMQIAADICVYTNGHFSVETLEI</sequence>
<protein>
    <recommendedName>
        <fullName evidence="1">ATP-dependent protease subunit HslV</fullName>
        <ecNumber evidence="1">3.4.25.2</ecNumber>
    </recommendedName>
</protein>
<proteinExistence type="inferred from homology"/>
<organism>
    <name type="scientific">Hyphomonas neptunium (strain ATCC 15444)</name>
    <dbReference type="NCBI Taxonomy" id="228405"/>
    <lineage>
        <taxon>Bacteria</taxon>
        <taxon>Pseudomonadati</taxon>
        <taxon>Pseudomonadota</taxon>
        <taxon>Alphaproteobacteria</taxon>
        <taxon>Hyphomonadales</taxon>
        <taxon>Hyphomonadaceae</taxon>
        <taxon>Hyphomonas</taxon>
    </lineage>
</organism>
<name>HSLV_HYPNA</name>
<reference key="1">
    <citation type="journal article" date="2006" name="J. Bacteriol.">
        <title>Comparative genomic evidence for a close relationship between the dimorphic prosthecate bacteria Hyphomonas neptunium and Caulobacter crescentus.</title>
        <authorList>
            <person name="Badger J.H."/>
            <person name="Hoover T.R."/>
            <person name="Brun Y.V."/>
            <person name="Weiner R.M."/>
            <person name="Laub M.T."/>
            <person name="Alexandre G."/>
            <person name="Mrazek J."/>
            <person name="Ren Q."/>
            <person name="Paulsen I.T."/>
            <person name="Nelson K.E."/>
            <person name="Khouri H.M."/>
            <person name="Radune D."/>
            <person name="Sosa J."/>
            <person name="Dodson R.J."/>
            <person name="Sullivan S.A."/>
            <person name="Rosovitz M.J."/>
            <person name="Madupu R."/>
            <person name="Brinkac L.M."/>
            <person name="Durkin A.S."/>
            <person name="Daugherty S.C."/>
            <person name="Kothari S.P."/>
            <person name="Giglio M.G."/>
            <person name="Zhou L."/>
            <person name="Haft D.H."/>
            <person name="Selengut J.D."/>
            <person name="Davidsen T.M."/>
            <person name="Yang Q."/>
            <person name="Zafar N."/>
            <person name="Ward N.L."/>
        </authorList>
    </citation>
    <scope>NUCLEOTIDE SEQUENCE [LARGE SCALE GENOMIC DNA]</scope>
    <source>
        <strain>ATCC 15444</strain>
    </source>
</reference>